<dbReference type="EC" id="2.1.1.195" evidence="1"/>
<dbReference type="EMBL" id="CP000544">
    <property type="protein sequence ID" value="ABM62693.1"/>
    <property type="molecule type" value="Genomic_DNA"/>
</dbReference>
<dbReference type="RefSeq" id="WP_011814715.1">
    <property type="nucleotide sequence ID" value="NC_008789.1"/>
</dbReference>
<dbReference type="SMR" id="A1WYD1"/>
<dbReference type="STRING" id="349124.Hhal_1929"/>
<dbReference type="KEGG" id="hha:Hhal_1929"/>
<dbReference type="eggNOG" id="COG1903">
    <property type="taxonomic scope" value="Bacteria"/>
</dbReference>
<dbReference type="HOGENOM" id="CLU_041273_0_0_6"/>
<dbReference type="OrthoDB" id="6439987at2"/>
<dbReference type="UniPathway" id="UPA00148">
    <property type="reaction ID" value="UER00227"/>
</dbReference>
<dbReference type="Proteomes" id="UP000000647">
    <property type="component" value="Chromosome"/>
</dbReference>
<dbReference type="GO" id="GO:0043780">
    <property type="term" value="F:cobalt-precorrin-5B C1-methyltransferase activity"/>
    <property type="evidence" value="ECO:0007669"/>
    <property type="project" value="RHEA"/>
</dbReference>
<dbReference type="GO" id="GO:0019251">
    <property type="term" value="P:anaerobic cobalamin biosynthetic process"/>
    <property type="evidence" value="ECO:0007669"/>
    <property type="project" value="UniProtKB-UniRule"/>
</dbReference>
<dbReference type="GO" id="GO:0032259">
    <property type="term" value="P:methylation"/>
    <property type="evidence" value="ECO:0007669"/>
    <property type="project" value="UniProtKB-KW"/>
</dbReference>
<dbReference type="Gene3D" id="3.30.2110.10">
    <property type="entry name" value="CbiD-like"/>
    <property type="match status" value="1"/>
</dbReference>
<dbReference type="HAMAP" id="MF_00787">
    <property type="entry name" value="CbiD"/>
    <property type="match status" value="1"/>
</dbReference>
<dbReference type="InterPro" id="IPR002748">
    <property type="entry name" value="CbiD"/>
</dbReference>
<dbReference type="InterPro" id="IPR036074">
    <property type="entry name" value="CbiD_sf"/>
</dbReference>
<dbReference type="NCBIfam" id="TIGR00312">
    <property type="entry name" value="cbiD"/>
    <property type="match status" value="1"/>
</dbReference>
<dbReference type="NCBIfam" id="NF000849">
    <property type="entry name" value="PRK00075.1-1"/>
    <property type="match status" value="1"/>
</dbReference>
<dbReference type="PANTHER" id="PTHR35863">
    <property type="entry name" value="COBALT-PRECORRIN-5B C(1)-METHYLTRANSFERASE"/>
    <property type="match status" value="1"/>
</dbReference>
<dbReference type="PANTHER" id="PTHR35863:SF1">
    <property type="entry name" value="COBALT-PRECORRIN-5B C(1)-METHYLTRANSFERASE"/>
    <property type="match status" value="1"/>
</dbReference>
<dbReference type="Pfam" id="PF01888">
    <property type="entry name" value="CbiD"/>
    <property type="match status" value="1"/>
</dbReference>
<dbReference type="PIRSF" id="PIRSF026782">
    <property type="entry name" value="CbiD"/>
    <property type="match status" value="1"/>
</dbReference>
<dbReference type="SUPFAM" id="SSF111342">
    <property type="entry name" value="CbiD-like"/>
    <property type="match status" value="1"/>
</dbReference>
<protein>
    <recommendedName>
        <fullName evidence="1">Cobalt-precorrin-5B C(1)-methyltransferase</fullName>
        <ecNumber evidence="1">2.1.1.195</ecNumber>
    </recommendedName>
    <alternativeName>
        <fullName evidence="1">Cobalt-precorrin-6A synthase</fullName>
    </alternativeName>
</protein>
<evidence type="ECO:0000255" key="1">
    <source>
        <dbReference type="HAMAP-Rule" id="MF_00787"/>
    </source>
</evidence>
<proteinExistence type="inferred from homology"/>
<comment type="function">
    <text evidence="1">Catalyzes the methylation of C-1 in cobalt-precorrin-5B to form cobalt-precorrin-6A.</text>
</comment>
<comment type="catalytic activity">
    <reaction evidence="1">
        <text>Co-precorrin-5B + S-adenosyl-L-methionine = Co-precorrin-6A + S-adenosyl-L-homocysteine</text>
        <dbReference type="Rhea" id="RHEA:26285"/>
        <dbReference type="ChEBI" id="CHEBI:57856"/>
        <dbReference type="ChEBI" id="CHEBI:59789"/>
        <dbReference type="ChEBI" id="CHEBI:60063"/>
        <dbReference type="ChEBI" id="CHEBI:60064"/>
        <dbReference type="EC" id="2.1.1.195"/>
    </reaction>
</comment>
<comment type="pathway">
    <text evidence="1">Cofactor biosynthesis; adenosylcobalamin biosynthesis; cob(II)yrinate a,c-diamide from sirohydrochlorin (anaerobic route): step 6/10.</text>
</comment>
<comment type="similarity">
    <text evidence="1">Belongs to the CbiD family.</text>
</comment>
<reference key="1">
    <citation type="submission" date="2006-12" db="EMBL/GenBank/DDBJ databases">
        <title>Complete sequence of Halorhodospira halophila SL1.</title>
        <authorList>
            <consortium name="US DOE Joint Genome Institute"/>
            <person name="Copeland A."/>
            <person name="Lucas S."/>
            <person name="Lapidus A."/>
            <person name="Barry K."/>
            <person name="Detter J.C."/>
            <person name="Glavina del Rio T."/>
            <person name="Hammon N."/>
            <person name="Israni S."/>
            <person name="Dalin E."/>
            <person name="Tice H."/>
            <person name="Pitluck S."/>
            <person name="Saunders E."/>
            <person name="Brettin T."/>
            <person name="Bruce D."/>
            <person name="Han C."/>
            <person name="Tapia R."/>
            <person name="Schmutz J."/>
            <person name="Larimer F."/>
            <person name="Land M."/>
            <person name="Hauser L."/>
            <person name="Kyrpides N."/>
            <person name="Mikhailova N."/>
            <person name="Hoff W."/>
            <person name="Richardson P."/>
        </authorList>
    </citation>
    <scope>NUCLEOTIDE SEQUENCE [LARGE SCALE GENOMIC DNA]</scope>
    <source>
        <strain>DSM 244 / SL1</strain>
    </source>
</reference>
<sequence>MSEDTSQPTDQQAGTALRRGWTTGACAAAAARAAFTGLVSGSFPDPVTIRLPRDRSPAFALAVHACGDGWARAGVIKDAGDDPDVTHGALVSVTARPGAPGRGVQLRAGPGVGTVRRSGLPVAAGEPAINPGPRGYIEQGIAEAAAALSAPTDVTLELAIEDGERLAAQTLNPRLGIEGGLSVLGTTGLLVPFSCAAWIDAIQRGIDVARAAGIEHVAGSTGRTSEQAVQAYHQLPDEALIDMGDFVGGMLKYLRRYPVPRVTIAGGVAKITKLAQGFLDVHSRRGQADLAALAETAGRLGADATCREVMATANTVAEAFDRAQAAGLPLGDAVAREAQQTALNLIDPACSEVEVLLFDRRGQRVGRAGWARD</sequence>
<feature type="chain" id="PRO_1000062246" description="Cobalt-precorrin-5B C(1)-methyltransferase">
    <location>
        <begin position="1"/>
        <end position="373"/>
    </location>
</feature>
<accession>A1WYD1</accession>
<gene>
    <name evidence="1" type="primary">cbiD</name>
    <name type="ordered locus">Hhal_1929</name>
</gene>
<keyword id="KW-0169">Cobalamin biosynthesis</keyword>
<keyword id="KW-0489">Methyltransferase</keyword>
<keyword id="KW-1185">Reference proteome</keyword>
<keyword id="KW-0949">S-adenosyl-L-methionine</keyword>
<keyword id="KW-0808">Transferase</keyword>
<name>CBID_HALHL</name>
<organism>
    <name type="scientific">Halorhodospira halophila (strain DSM 244 / SL1)</name>
    <name type="common">Ectothiorhodospira halophila (strain DSM 244 / SL1)</name>
    <dbReference type="NCBI Taxonomy" id="349124"/>
    <lineage>
        <taxon>Bacteria</taxon>
        <taxon>Pseudomonadati</taxon>
        <taxon>Pseudomonadota</taxon>
        <taxon>Gammaproteobacteria</taxon>
        <taxon>Chromatiales</taxon>
        <taxon>Ectothiorhodospiraceae</taxon>
        <taxon>Halorhodospira</taxon>
    </lineage>
</organism>